<reference key="1">
    <citation type="journal article" date="1995" name="J. Biol. Chem.">
        <title>Sequence analysis and chromosomal localization of human Cap Z. Conserved residues within the actin-binding domain may link Cap Z to gelsolin/severin and profilin protein families.</title>
        <authorList>
            <person name="Barron-Casella E.A."/>
            <person name="Torres M.A."/>
            <person name="Scherer S.W."/>
            <person name="Heng H.H.Q."/>
            <person name="Tsui L.-C."/>
            <person name="Casella J.F."/>
        </authorList>
    </citation>
    <scope>NUCLEOTIDE SEQUENCE [MRNA] (ISOFORM 1)</scope>
    <source>
        <tissue>Retina</tissue>
    </source>
</reference>
<reference key="2">
    <citation type="submission" date="2004-10" db="EMBL/GenBank/DDBJ databases">
        <title>Cloning of human full-length CDSs in BD Creator(TM) system donor vector.</title>
        <authorList>
            <person name="Kalnine N."/>
            <person name="Chen X."/>
            <person name="Rolfs A."/>
            <person name="Halleck A."/>
            <person name="Hines L."/>
            <person name="Eisenstein S."/>
            <person name="Koundinya M."/>
            <person name="Raphael J."/>
            <person name="Moreira D."/>
            <person name="Kelley T."/>
            <person name="LaBaer J."/>
            <person name="Lin Y."/>
            <person name="Phelan M."/>
            <person name="Farmer A."/>
        </authorList>
    </citation>
    <scope>NUCLEOTIDE SEQUENCE [LARGE SCALE MRNA] (ISOFORM 1)</scope>
</reference>
<reference key="3">
    <citation type="journal article" date="2006" name="Nature">
        <title>The DNA sequence and biological annotation of human chromosome 1.</title>
        <authorList>
            <person name="Gregory S.G."/>
            <person name="Barlow K.F."/>
            <person name="McLay K.E."/>
            <person name="Kaul R."/>
            <person name="Swarbreck D."/>
            <person name="Dunham A."/>
            <person name="Scott C.E."/>
            <person name="Howe K.L."/>
            <person name="Woodfine K."/>
            <person name="Spencer C.C.A."/>
            <person name="Jones M.C."/>
            <person name="Gillson C."/>
            <person name="Searle S."/>
            <person name="Zhou Y."/>
            <person name="Kokocinski F."/>
            <person name="McDonald L."/>
            <person name="Evans R."/>
            <person name="Phillips K."/>
            <person name="Atkinson A."/>
            <person name="Cooper R."/>
            <person name="Jones C."/>
            <person name="Hall R.E."/>
            <person name="Andrews T.D."/>
            <person name="Lloyd C."/>
            <person name="Ainscough R."/>
            <person name="Almeida J.P."/>
            <person name="Ambrose K.D."/>
            <person name="Anderson F."/>
            <person name="Andrew R.W."/>
            <person name="Ashwell R.I.S."/>
            <person name="Aubin K."/>
            <person name="Babbage A.K."/>
            <person name="Bagguley C.L."/>
            <person name="Bailey J."/>
            <person name="Beasley H."/>
            <person name="Bethel G."/>
            <person name="Bird C.P."/>
            <person name="Bray-Allen S."/>
            <person name="Brown J.Y."/>
            <person name="Brown A.J."/>
            <person name="Buckley D."/>
            <person name="Burton J."/>
            <person name="Bye J."/>
            <person name="Carder C."/>
            <person name="Chapman J.C."/>
            <person name="Clark S.Y."/>
            <person name="Clarke G."/>
            <person name="Clee C."/>
            <person name="Cobley V."/>
            <person name="Collier R.E."/>
            <person name="Corby N."/>
            <person name="Coville G.J."/>
            <person name="Davies J."/>
            <person name="Deadman R."/>
            <person name="Dunn M."/>
            <person name="Earthrowl M."/>
            <person name="Ellington A.G."/>
            <person name="Errington H."/>
            <person name="Frankish A."/>
            <person name="Frankland J."/>
            <person name="French L."/>
            <person name="Garner P."/>
            <person name="Garnett J."/>
            <person name="Gay L."/>
            <person name="Ghori M.R.J."/>
            <person name="Gibson R."/>
            <person name="Gilby L.M."/>
            <person name="Gillett W."/>
            <person name="Glithero R.J."/>
            <person name="Grafham D.V."/>
            <person name="Griffiths C."/>
            <person name="Griffiths-Jones S."/>
            <person name="Grocock R."/>
            <person name="Hammond S."/>
            <person name="Harrison E.S.I."/>
            <person name="Hart E."/>
            <person name="Haugen E."/>
            <person name="Heath P.D."/>
            <person name="Holmes S."/>
            <person name="Holt K."/>
            <person name="Howden P.J."/>
            <person name="Hunt A.R."/>
            <person name="Hunt S.E."/>
            <person name="Hunter G."/>
            <person name="Isherwood J."/>
            <person name="James R."/>
            <person name="Johnson C."/>
            <person name="Johnson D."/>
            <person name="Joy A."/>
            <person name="Kay M."/>
            <person name="Kershaw J.K."/>
            <person name="Kibukawa M."/>
            <person name="Kimberley A.M."/>
            <person name="King A."/>
            <person name="Knights A.J."/>
            <person name="Lad H."/>
            <person name="Laird G."/>
            <person name="Lawlor S."/>
            <person name="Leongamornlert D.A."/>
            <person name="Lloyd D.M."/>
            <person name="Loveland J."/>
            <person name="Lovell J."/>
            <person name="Lush M.J."/>
            <person name="Lyne R."/>
            <person name="Martin S."/>
            <person name="Mashreghi-Mohammadi M."/>
            <person name="Matthews L."/>
            <person name="Matthews N.S.W."/>
            <person name="McLaren S."/>
            <person name="Milne S."/>
            <person name="Mistry S."/>
            <person name="Moore M.J.F."/>
            <person name="Nickerson T."/>
            <person name="O'Dell C.N."/>
            <person name="Oliver K."/>
            <person name="Palmeiri A."/>
            <person name="Palmer S.A."/>
            <person name="Parker A."/>
            <person name="Patel D."/>
            <person name="Pearce A.V."/>
            <person name="Peck A.I."/>
            <person name="Pelan S."/>
            <person name="Phelps K."/>
            <person name="Phillimore B.J."/>
            <person name="Plumb R."/>
            <person name="Rajan J."/>
            <person name="Raymond C."/>
            <person name="Rouse G."/>
            <person name="Saenphimmachak C."/>
            <person name="Sehra H.K."/>
            <person name="Sheridan E."/>
            <person name="Shownkeen R."/>
            <person name="Sims S."/>
            <person name="Skuce C.D."/>
            <person name="Smith M."/>
            <person name="Steward C."/>
            <person name="Subramanian S."/>
            <person name="Sycamore N."/>
            <person name="Tracey A."/>
            <person name="Tromans A."/>
            <person name="Van Helmond Z."/>
            <person name="Wall M."/>
            <person name="Wallis J.M."/>
            <person name="White S."/>
            <person name="Whitehead S.L."/>
            <person name="Wilkinson J.E."/>
            <person name="Willey D.L."/>
            <person name="Williams H."/>
            <person name="Wilming L."/>
            <person name="Wray P.W."/>
            <person name="Wu Z."/>
            <person name="Coulson A."/>
            <person name="Vaudin M."/>
            <person name="Sulston J.E."/>
            <person name="Durbin R.M."/>
            <person name="Hubbard T."/>
            <person name="Wooster R."/>
            <person name="Dunham I."/>
            <person name="Carter N.P."/>
            <person name="McVean G."/>
            <person name="Ross M.T."/>
            <person name="Harrow J."/>
            <person name="Olson M.V."/>
            <person name="Beck S."/>
            <person name="Rogers J."/>
            <person name="Bentley D.R."/>
        </authorList>
    </citation>
    <scope>NUCLEOTIDE SEQUENCE [LARGE SCALE GENOMIC DNA]</scope>
</reference>
<reference key="4">
    <citation type="submission" date="2005-07" db="EMBL/GenBank/DDBJ databases">
        <authorList>
            <person name="Mural R.J."/>
            <person name="Istrail S."/>
            <person name="Sutton G.G."/>
            <person name="Florea L."/>
            <person name="Halpern A.L."/>
            <person name="Mobarry C.M."/>
            <person name="Lippert R."/>
            <person name="Walenz B."/>
            <person name="Shatkay H."/>
            <person name="Dew I."/>
            <person name="Miller J.R."/>
            <person name="Flanigan M.J."/>
            <person name="Edwards N.J."/>
            <person name="Bolanos R."/>
            <person name="Fasulo D."/>
            <person name="Halldorsson B.V."/>
            <person name="Hannenhalli S."/>
            <person name="Turner R."/>
            <person name="Yooseph S."/>
            <person name="Lu F."/>
            <person name="Nusskern D.R."/>
            <person name="Shue B.C."/>
            <person name="Zheng X.H."/>
            <person name="Zhong F."/>
            <person name="Delcher A.L."/>
            <person name="Huson D.H."/>
            <person name="Kravitz S.A."/>
            <person name="Mouchard L."/>
            <person name="Reinert K."/>
            <person name="Remington K.A."/>
            <person name="Clark A.G."/>
            <person name="Waterman M.S."/>
            <person name="Eichler E.E."/>
            <person name="Adams M.D."/>
            <person name="Hunkapiller M.W."/>
            <person name="Myers E.W."/>
            <person name="Venter J.C."/>
        </authorList>
    </citation>
    <scope>NUCLEOTIDE SEQUENCE [LARGE SCALE GENOMIC DNA]</scope>
</reference>
<reference key="5">
    <citation type="journal article" date="2004" name="Genome Res.">
        <title>The status, quality, and expansion of the NIH full-length cDNA project: the Mammalian Gene Collection (MGC).</title>
        <authorList>
            <consortium name="The MGC Project Team"/>
        </authorList>
    </citation>
    <scope>NUCLEOTIDE SEQUENCE [LARGE SCALE MRNA] (ISOFORM 1)</scope>
    <source>
        <tissue>Ovary</tissue>
    </source>
</reference>
<reference key="6">
    <citation type="journal article" date="2003" name="Nat. Biotechnol.">
        <title>Exploring proteomes and analyzing protein processing by mass spectrometric identification of sorted N-terminal peptides.</title>
        <authorList>
            <person name="Gevaert K."/>
            <person name="Goethals M."/>
            <person name="Martens L."/>
            <person name="Van Damme J."/>
            <person name="Staes A."/>
            <person name="Thomas G.R."/>
            <person name="Vandekerckhove J."/>
        </authorList>
    </citation>
    <scope>PROTEIN SEQUENCE OF 2-14</scope>
    <scope>ACETYLATION AT SER-2</scope>
    <source>
        <tissue>Platelet</tissue>
    </source>
</reference>
<reference key="7">
    <citation type="submission" date="2007-03" db="UniProtKB">
        <authorList>
            <person name="Lubec G."/>
            <person name="Afjehi-Sadat L."/>
        </authorList>
    </citation>
    <scope>PROTEIN SEQUENCE OF 95-108</scope>
    <scope>IDENTIFICATION BY MASS SPECTROMETRY</scope>
    <source>
        <tissue>Brain</tissue>
        <tissue>Cajal-Retzius cell</tissue>
    </source>
</reference>
<reference key="8">
    <citation type="journal article" date="2005" name="Biochem. J.">
        <title>The phosphorylation of CapZ-interacting protein (CapZIP) by stress-activated protein kinases triggers its dissociation from CapZ.</title>
        <authorList>
            <person name="Eyers C.E."/>
            <person name="McNeill H."/>
            <person name="Knebel A."/>
            <person name="Morrice N."/>
            <person name="Arthur S.J.C."/>
            <person name="Cuenda A."/>
            <person name="Cohen P."/>
        </authorList>
    </citation>
    <scope>INTERACTION WITH RCSD1/CAPZIP</scope>
    <scope>IDENTIFICATION BY MASS SPECTROMETRY</scope>
</reference>
<reference key="9">
    <citation type="journal article" date="2006" name="Cell">
        <title>A Rich1/Amot complex regulates the Cdc42 GTPase and apical-polarity proteins in epithelial cells.</title>
        <authorList>
            <person name="Wells C.D."/>
            <person name="Fawcett J.P."/>
            <person name="Traweger A."/>
            <person name="Yamanaka Y."/>
            <person name="Goudreault M."/>
            <person name="Elder K."/>
            <person name="Kulkarni S."/>
            <person name="Gish G."/>
            <person name="Virag C."/>
            <person name="Lim C."/>
            <person name="Colwill K."/>
            <person name="Starostine A."/>
            <person name="Metalnikov P."/>
            <person name="Pawson T."/>
        </authorList>
    </citation>
    <scope>INTERACTION WITH ARHGAP17</scope>
</reference>
<reference key="10">
    <citation type="journal article" date="2009" name="Anal. Chem.">
        <title>Lys-N and trypsin cover complementary parts of the phosphoproteome in a refined SCX-based approach.</title>
        <authorList>
            <person name="Gauci S."/>
            <person name="Helbig A.O."/>
            <person name="Slijper M."/>
            <person name="Krijgsveld J."/>
            <person name="Heck A.J."/>
            <person name="Mohammed S."/>
        </authorList>
    </citation>
    <scope>ACETYLATION [LARGE SCALE ANALYSIS] AT SER-2</scope>
    <scope>CLEAVAGE OF INITIATOR METHIONINE [LARGE SCALE ANALYSIS]</scope>
    <scope>IDENTIFICATION BY MASS SPECTROMETRY [LARGE SCALE ANALYSIS]</scope>
</reference>
<reference key="11">
    <citation type="journal article" date="2009" name="Dev. Cell">
        <title>The Arp2/3 activator WASH controls the fission of endosomes through a large multiprotein complex.</title>
        <authorList>
            <person name="Derivery E."/>
            <person name="Sousa C."/>
            <person name="Gautier J.J."/>
            <person name="Lombard B."/>
            <person name="Loew D."/>
            <person name="Gautreau A."/>
        </authorList>
    </citation>
    <scope>IDENTIFICATION IN THE WASH COMPLEX</scope>
</reference>
<reference key="12">
    <citation type="journal article" date="2009" name="Science">
        <title>Lysine acetylation targets protein complexes and co-regulates major cellular functions.</title>
        <authorList>
            <person name="Choudhary C."/>
            <person name="Kumar C."/>
            <person name="Gnad F."/>
            <person name="Nielsen M.L."/>
            <person name="Rehman M."/>
            <person name="Walther T.C."/>
            <person name="Olsen J.V."/>
            <person name="Mann M."/>
        </authorList>
    </citation>
    <scope>ACETYLATION [LARGE SCALE ANALYSIS] AT LYS-235</scope>
    <scope>IDENTIFICATION BY MASS SPECTROMETRY [LARGE SCALE ANALYSIS]</scope>
</reference>
<reference key="13">
    <citation type="journal article" date="2011" name="BMC Biol.">
        <title>Identification and characterization of a set of conserved and new regulators of cytoskeletal organisation, cell morphology and migration.</title>
        <authorList>
            <person name="Bai S.W."/>
            <person name="Herrera-Abreu M.T."/>
            <person name="Rohn J.L."/>
            <person name="Racine V."/>
            <person name="Tajadura V."/>
            <person name="Suryavanshi N."/>
            <person name="Bechtel S."/>
            <person name="Wiemann S."/>
            <person name="Baum B."/>
            <person name="Ridley A.J."/>
        </authorList>
    </citation>
    <scope>FUNCTION</scope>
</reference>
<reference key="14">
    <citation type="journal article" date="2011" name="BMC Syst. Biol.">
        <title>Initial characterization of the human central proteome.</title>
        <authorList>
            <person name="Burkard T.R."/>
            <person name="Planyavsky M."/>
            <person name="Kaupe I."/>
            <person name="Breitwieser F.P."/>
            <person name="Buerckstuemmer T."/>
            <person name="Bennett K.L."/>
            <person name="Superti-Furga G."/>
            <person name="Colinge J."/>
        </authorList>
    </citation>
    <scope>IDENTIFICATION BY MASS SPECTROMETRY [LARGE SCALE ANALYSIS]</scope>
</reference>
<reference key="15">
    <citation type="journal article" date="2011" name="Sci. Signal.">
        <title>System-wide temporal characterization of the proteome and phosphoproteome of human embryonic stem cell differentiation.</title>
        <authorList>
            <person name="Rigbolt K.T."/>
            <person name="Prokhorova T.A."/>
            <person name="Akimov V."/>
            <person name="Henningsen J."/>
            <person name="Johansen P.T."/>
            <person name="Kratchmarova I."/>
            <person name="Kassem M."/>
            <person name="Mann M."/>
            <person name="Olsen J.V."/>
            <person name="Blagoev B."/>
        </authorList>
    </citation>
    <scope>IDENTIFICATION BY MASS SPECTROMETRY [LARGE SCALE ANALYSIS]</scope>
</reference>
<reference key="16">
    <citation type="journal article" date="2012" name="Mol. Cell. Proteomics">
        <title>Comparative large-scale characterisation of plant vs. mammal proteins reveals similar and idiosyncratic N-alpha acetylation features.</title>
        <authorList>
            <person name="Bienvenut W.V."/>
            <person name="Sumpton D."/>
            <person name="Martinez A."/>
            <person name="Lilla S."/>
            <person name="Espagne C."/>
            <person name="Meinnel T."/>
            <person name="Giglione C."/>
        </authorList>
    </citation>
    <scope>ACETYLATION [LARGE SCALE ANALYSIS] AT SER-2</scope>
    <scope>CLEAVAGE OF INITIATOR METHIONINE [LARGE SCALE ANALYSIS]</scope>
    <scope>IDENTIFICATION BY MASS SPECTROMETRY [LARGE SCALE ANALYSIS]</scope>
</reference>
<reference key="17">
    <citation type="journal article" date="2012" name="Proc. Natl. Acad. Sci. U.S.A.">
        <title>N-terminal acetylome analyses and functional insights of the N-terminal acetyltransferase NatB.</title>
        <authorList>
            <person name="Van Damme P."/>
            <person name="Lasa M."/>
            <person name="Polevoda B."/>
            <person name="Gazquez C."/>
            <person name="Elosegui-Artola A."/>
            <person name="Kim D.S."/>
            <person name="De Juan-Pardo E."/>
            <person name="Demeyer K."/>
            <person name="Hole K."/>
            <person name="Larrea E."/>
            <person name="Timmerman E."/>
            <person name="Prieto J."/>
            <person name="Arnesen T."/>
            <person name="Sherman F."/>
            <person name="Gevaert K."/>
            <person name="Aldabe R."/>
        </authorList>
    </citation>
    <scope>ACETYLATION [LARGE SCALE ANALYSIS] AT SER-2</scope>
    <scope>CLEAVAGE OF INITIATOR METHIONINE [LARGE SCALE ANALYSIS]</scope>
    <scope>IDENTIFICATION BY MASS SPECTROMETRY [LARGE SCALE ANALYSIS]</scope>
</reference>
<reference key="18">
    <citation type="journal article" date="2013" name="J. Proteome Res.">
        <title>Toward a comprehensive characterization of a human cancer cell phosphoproteome.</title>
        <authorList>
            <person name="Zhou H."/>
            <person name="Di Palma S."/>
            <person name="Preisinger C."/>
            <person name="Peng M."/>
            <person name="Polat A.N."/>
            <person name="Heck A.J."/>
            <person name="Mohammed S."/>
        </authorList>
    </citation>
    <scope>PHOSPHORYLATION [LARGE SCALE ANALYSIS] AT SER-2</scope>
    <scope>PHOSPHORYLATION AT SER-263 (ISOFORM 2)</scope>
    <scope>IDENTIFICATION BY MASS SPECTROMETRY [LARGE SCALE ANALYSIS]</scope>
    <source>
        <tissue>Erythroleukemia</tissue>
    </source>
</reference>
<reference key="19">
    <citation type="journal article" date="2014" name="J. Proteomics">
        <title>An enzyme assisted RP-RPLC approach for in-depth analysis of human liver phosphoproteome.</title>
        <authorList>
            <person name="Bian Y."/>
            <person name="Song C."/>
            <person name="Cheng K."/>
            <person name="Dong M."/>
            <person name="Wang F."/>
            <person name="Huang J."/>
            <person name="Sun D."/>
            <person name="Wang L."/>
            <person name="Ye M."/>
            <person name="Zou H."/>
        </authorList>
    </citation>
    <scope>IDENTIFICATION BY MASS SPECTROMETRY [LARGE SCALE ANALYSIS]</scope>
    <source>
        <tissue>Liver</tissue>
    </source>
</reference>
<reference key="20">
    <citation type="journal article" date="2015" name="Proteomics">
        <title>N-terminome analysis of the human mitochondrial proteome.</title>
        <authorList>
            <person name="Vaca Jacome A.S."/>
            <person name="Rabilloud T."/>
            <person name="Schaeffer-Reiss C."/>
            <person name="Rompais M."/>
            <person name="Ayoub D."/>
            <person name="Lane L."/>
            <person name="Bairoch A."/>
            <person name="Van Dorsselaer A."/>
            <person name="Carapito C."/>
        </authorList>
    </citation>
    <scope>ACETYLATION [LARGE SCALE ANALYSIS] AT SER-2</scope>
    <scope>CLEAVAGE OF INITIATOR METHIONINE [LARGE SCALE ANALYSIS]</scope>
    <scope>IDENTIFICATION BY MASS SPECTROMETRY [LARGE SCALE ANALYSIS]</scope>
</reference>
<reference key="21">
    <citation type="journal article" date="2017" name="Hum. Mutat.">
        <title>A recurrent de novo mutation in ACTG1 causes isolated ocular coloboma.</title>
        <authorList>
            <consortium name="UK10K"/>
            <person name="Rainger J."/>
            <person name="Williamson K.A."/>
            <person name="Soares D.C."/>
            <person name="Truch J."/>
            <person name="Kurian D."/>
            <person name="Gillessen-Kaesbach G."/>
            <person name="Seawright A."/>
            <person name="Prendergast J."/>
            <person name="Halachev M."/>
            <person name="Wheeler A."/>
            <person name="McTeir L."/>
            <person name="Gill A.C."/>
            <person name="van Heyningen V."/>
            <person name="Davey M.G."/>
            <person name="FitzPatrick D.R."/>
        </authorList>
    </citation>
    <scope>INTERACTION WITH ACTG1</scope>
</reference>
<reference key="22">
    <citation type="journal article" date="2018" name="Nat. Cell Biol.">
        <title>Deregulation of CRAD-controlled cytoskeleton initiates mucinous colorectal cancer via beta-catenin.</title>
        <authorList>
            <person name="Jung Y.S."/>
            <person name="Wang W."/>
            <person name="Jun S."/>
            <person name="Zhang J."/>
            <person name="Srivastava M."/>
            <person name="Kim M.J."/>
            <person name="Lien E.M."/>
            <person name="Shang J."/>
            <person name="Chen J."/>
            <person name="McCrea P.D."/>
            <person name="Zhang S."/>
            <person name="Park J.I."/>
        </authorList>
    </citation>
    <scope>INTERACTION WITH CRACD</scope>
</reference>
<protein>
    <recommendedName>
        <fullName>F-actin-capping protein subunit beta</fullName>
    </recommendedName>
    <alternativeName>
        <fullName>CapZ beta</fullName>
    </alternativeName>
</protein>
<organism>
    <name type="scientific">Homo sapiens</name>
    <name type="common">Human</name>
    <dbReference type="NCBI Taxonomy" id="9606"/>
    <lineage>
        <taxon>Eukaryota</taxon>
        <taxon>Metazoa</taxon>
        <taxon>Chordata</taxon>
        <taxon>Craniata</taxon>
        <taxon>Vertebrata</taxon>
        <taxon>Euteleostomi</taxon>
        <taxon>Mammalia</taxon>
        <taxon>Eutheria</taxon>
        <taxon>Euarchontoglires</taxon>
        <taxon>Primates</taxon>
        <taxon>Haplorrhini</taxon>
        <taxon>Catarrhini</taxon>
        <taxon>Hominidae</taxon>
        <taxon>Homo</taxon>
    </lineage>
</organism>
<comment type="function">
    <text evidence="1 6">F-actin-capping proteins bind in a Ca(2+)-independent manner to the fast growing ends of actin filaments (barbed end) thereby blocking the exchange of subunits at these ends. Unlike other capping proteins (such as gelsolin and severin), these proteins do not sever actin filaments. Plays a role in the regulation of cell morphology and cytoskeletal organization. Forms, with CAPZB, the barbed end of the fast growing ends of actin filaments in the dynactin complex and stabilizes dynactin structure. The dynactin multiprotein complex activates the molecular motor dynein for ultra-processive transport along microtubules (By similarity).</text>
</comment>
<comment type="subunit">
    <text evidence="1 3 4 5 7 8">Component of the F-actin capping complex, composed of a heterodimer of an alpha and a beta subunit. Subunit of dynactin, a multiprotein complex part of a tripartite complex with dynein and a adapter, such as BICDL1, BICD2 or HOOK3. The dynactin complex is built around ACTR1A/ACTB filament and consists of an actin-related filament composed of a shoulder domain, a pointed end and a barbed end. Its length is defined by its flexible shoulder domain. The soulder is composed of 2 DCTN1 subunits, 4 DCTN2 and 2 DCTN3. The 4 DCNT2 (via N-terminus) bind the ACTR1A filament and act as molecular rulers to determine the length. The pointed end is important for binding dynein-dynactin cargo adapters. Consists of 4 subunits: ACTR10, DCNT4, DCTN5 and DCTN6. The barbed end is composed of a CAPZA1:CAPZB heterodimers, which binds ACTR1A/ACTB filament and dynactin and stabilizes dynactin (By similarity). Interacts with ARHGAP17 (PubMed:16678097). Interaction with RCSD1/CAPZIP (PubMed:15850461). Component of the WASH complex, composed of F-actin-capping protein subunit alpha (CAPZA1, CAPZA2 or CAPZA3), F-actin-capping protein subunit beta (CAPZB), WASH (WASHC1, WASH2P, WASH3P, WASH4P, WASH5P or WASH6P), WASHC2 (WASHC2A or WASHC2C), WASHC3, WASHC4 and WASHC5 (PubMed:19922875). Interacts with ACTG1 (PubMed:28493397). Directly interacts with CRACD; this interaction decreases binding to actin (PubMed:30361697).</text>
</comment>
<comment type="interaction">
    <interactant intactId="EBI-353595">
        <id>P47756</id>
    </interactant>
    <interactant intactId="EBI-355586">
        <id>P52907</id>
        <label>CAPZA1</label>
    </interactant>
    <organismsDiffer>false</organismsDiffer>
    <experiments>4</experiments>
</comment>
<comment type="interaction">
    <interactant intactId="EBI-353595">
        <id>P47756</id>
    </interactant>
    <interactant intactId="EBI-349854">
        <id>P13569</id>
        <label>CFTR</label>
    </interactant>
    <organismsDiffer>false</organismsDiffer>
    <experiments>23</experiments>
</comment>
<comment type="subcellular location">
    <subcellularLocation>
        <location evidence="1">Cytoplasm</location>
        <location evidence="1">Cytoskeleton</location>
    </subcellularLocation>
    <subcellularLocation>
        <location evidence="1">Cytoplasm</location>
        <location evidence="1">Myofibril</location>
        <location evidence="1">Sarcomere</location>
    </subcellularLocation>
</comment>
<comment type="alternative products">
    <event type="alternative splicing"/>
    <isoform>
        <id>P47756-2</id>
        <name>1</name>
        <sequence type="displayed"/>
    </isoform>
    <isoform>
        <id>P47756-1</id>
        <name>2</name>
        <sequence type="described" ref="VSP_061615"/>
    </isoform>
    <isoform>
        <id>P47756-3</id>
        <name>3</name>
        <sequence type="not described"/>
    </isoform>
</comment>
<comment type="similarity">
    <text evidence="9">Belongs to the F-actin-capping protein beta subunit family.</text>
</comment>
<proteinExistence type="evidence at protein level"/>
<evidence type="ECO:0000250" key="1">
    <source>
        <dbReference type="UniProtKB" id="A9XFX6"/>
    </source>
</evidence>
<evidence type="ECO:0000269" key="2">
    <source>
    </source>
</evidence>
<evidence type="ECO:0000269" key="3">
    <source>
    </source>
</evidence>
<evidence type="ECO:0000269" key="4">
    <source>
    </source>
</evidence>
<evidence type="ECO:0000269" key="5">
    <source>
    </source>
</evidence>
<evidence type="ECO:0000269" key="6">
    <source>
    </source>
</evidence>
<evidence type="ECO:0000269" key="7">
    <source>
    </source>
</evidence>
<evidence type="ECO:0000269" key="8">
    <source>
    </source>
</evidence>
<evidence type="ECO:0000305" key="9"/>
<evidence type="ECO:0000312" key="10">
    <source>
        <dbReference type="HGNC" id="HGNC:1491"/>
    </source>
</evidence>
<evidence type="ECO:0007744" key="11">
    <source>
    </source>
</evidence>
<evidence type="ECO:0007744" key="12">
    <source>
    </source>
</evidence>
<evidence type="ECO:0007744" key="13">
    <source>
    </source>
</evidence>
<evidence type="ECO:0007744" key="14">
    <source>
    </source>
</evidence>
<evidence type="ECO:0007744" key="15">
    <source>
    </source>
</evidence>
<evidence type="ECO:0007744" key="16">
    <source>
    </source>
</evidence>
<evidence type="ECO:0007829" key="17">
    <source>
        <dbReference type="PDB" id="8F8Q"/>
    </source>
</evidence>
<feature type="initiator methionine" description="Removed" evidence="2 11 13 14 16">
    <location>
        <position position="1"/>
    </location>
</feature>
<feature type="chain" id="PRO_0000204634" description="F-actin-capping protein subunit beta">
    <location>
        <begin position="2"/>
        <end position="272"/>
    </location>
</feature>
<feature type="modified residue" description="N-acetylserine" evidence="2 11 13 14 16">
    <location>
        <position position="2"/>
    </location>
</feature>
<feature type="modified residue" description="Phosphoserine" evidence="15">
    <location>
        <position position="2"/>
    </location>
</feature>
<feature type="modified residue" description="N6-acetyllysine" evidence="12">
    <location>
        <position position="235"/>
    </location>
</feature>
<feature type="splice variant" id="VSP_061615" description="In isoform 2.">
    <original>VQTFADKSKQEALKNDLVEALKRKQQC</original>
    <variation>IDAIPDNQKFKQLQRELSQVLTQRQIYIQPDN</variation>
    <location>
        <begin position="246"/>
        <end position="272"/>
    </location>
</feature>
<feature type="sequence conflict" description="In Ref. 2; AAV38278." evidence="9" ref="2">
    <original>R</original>
    <variation>G</variation>
    <location>
        <position position="225"/>
    </location>
</feature>
<feature type="helix" evidence="17">
    <location>
        <begin position="3"/>
        <end position="14"/>
    </location>
</feature>
<feature type="helix" evidence="17">
    <location>
        <begin position="21"/>
        <end position="26"/>
    </location>
</feature>
<feature type="turn" evidence="17">
    <location>
        <begin position="27"/>
        <end position="31"/>
    </location>
</feature>
<feature type="helix" evidence="17">
    <location>
        <begin position="36"/>
        <end position="39"/>
    </location>
</feature>
<feature type="turn" evidence="17">
    <location>
        <begin position="40"/>
        <end position="42"/>
    </location>
</feature>
<feature type="strand" evidence="17">
    <location>
        <begin position="48"/>
        <end position="52"/>
    </location>
</feature>
<feature type="turn" evidence="17">
    <location>
        <begin position="53"/>
        <end position="56"/>
    </location>
</feature>
<feature type="strand" evidence="17">
    <location>
        <begin position="57"/>
        <end position="61"/>
    </location>
</feature>
<feature type="strand" evidence="17">
    <location>
        <begin position="65"/>
        <end position="67"/>
    </location>
</feature>
<feature type="strand" evidence="17">
    <location>
        <begin position="70"/>
        <end position="72"/>
    </location>
</feature>
<feature type="turn" evidence="17">
    <location>
        <begin position="74"/>
        <end position="76"/>
    </location>
</feature>
<feature type="strand" evidence="17">
    <location>
        <begin position="79"/>
        <end position="81"/>
    </location>
</feature>
<feature type="helix" evidence="17">
    <location>
        <begin position="91"/>
        <end position="111"/>
    </location>
</feature>
<feature type="strand" evidence="17">
    <location>
        <begin position="113"/>
        <end position="123"/>
    </location>
</feature>
<feature type="strand" evidence="17">
    <location>
        <begin position="125"/>
        <end position="137"/>
    </location>
</feature>
<feature type="turn" evidence="17">
    <location>
        <begin position="140"/>
        <end position="143"/>
    </location>
</feature>
<feature type="strand" evidence="17">
    <location>
        <begin position="145"/>
        <end position="158"/>
    </location>
</feature>
<feature type="strand" evidence="17">
    <location>
        <begin position="163"/>
        <end position="181"/>
    </location>
</feature>
<feature type="turn" evidence="17">
    <location>
        <begin position="182"/>
        <end position="184"/>
    </location>
</feature>
<feature type="strand" evidence="17">
    <location>
        <begin position="185"/>
        <end position="202"/>
    </location>
</feature>
<feature type="strand" evidence="17">
    <location>
        <begin position="204"/>
        <end position="207"/>
    </location>
</feature>
<feature type="helix" evidence="17">
    <location>
        <begin position="209"/>
        <end position="230"/>
    </location>
</feature>
<feature type="helix" evidence="17">
    <location>
        <begin position="232"/>
        <end position="243"/>
    </location>
</feature>
<feature type="turn" evidence="17">
    <location>
        <begin position="249"/>
        <end position="251"/>
    </location>
</feature>
<feature type="helix" evidence="17">
    <location>
        <begin position="252"/>
        <end position="255"/>
    </location>
</feature>
<feature type="helix" evidence="17">
    <location>
        <begin position="258"/>
        <end position="270"/>
    </location>
</feature>
<feature type="modified residue" description="Phosphoserine" evidence="15">
    <location sequence="P47756-1">
        <position position="263"/>
    </location>
</feature>
<sequence>MSDQQLDCALDLMRRLPPQQIEKNLSDLIDLVPSLCEDLLSSVDQPLKIARDKVVGKDYLLCDYNRDGDSYRSPWSNKYDPPLEDGAMPSARLRKLEVEANNAFDQYRDLYFEGGVSSVYLWDLDHGFAGVILIKKAGDGSKKIKGCWDSIHVVEVQEKSSGRTAHYKLTSTVMLWLQTNKSGSGTMNLGGSLTRQMEKDETVSDCSPHIANIGRLVEDMENKIRSTLNEIYFGKTKDIVNGLRSVQTFADKSKQEALKNDLVEALKRKQQC</sequence>
<dbReference type="EMBL" id="U03271">
    <property type="protein sequence ID" value="AAA87395.1"/>
    <property type="molecule type" value="mRNA"/>
</dbReference>
<dbReference type="EMBL" id="BT019470">
    <property type="protein sequence ID" value="AAV38277.1"/>
    <property type="molecule type" value="mRNA"/>
</dbReference>
<dbReference type="EMBL" id="BT019471">
    <property type="protein sequence ID" value="AAV38278.1"/>
    <property type="molecule type" value="mRNA"/>
</dbReference>
<dbReference type="EMBL" id="AL035413">
    <property type="status" value="NOT_ANNOTATED_CDS"/>
    <property type="molecule type" value="Genomic_DNA"/>
</dbReference>
<dbReference type="EMBL" id="AL359199">
    <property type="status" value="NOT_ANNOTATED_CDS"/>
    <property type="molecule type" value="Genomic_DNA"/>
</dbReference>
<dbReference type="EMBL" id="AL445163">
    <property type="status" value="NOT_ANNOTATED_CDS"/>
    <property type="molecule type" value="Genomic_DNA"/>
</dbReference>
<dbReference type="EMBL" id="CH471134">
    <property type="protein sequence ID" value="EAW94890.1"/>
    <property type="molecule type" value="Genomic_DNA"/>
</dbReference>
<dbReference type="EMBL" id="BC024601">
    <property type="protein sequence ID" value="AAH24601.1"/>
    <property type="molecule type" value="mRNA"/>
</dbReference>
<dbReference type="EMBL" id="BC107752">
    <property type="protein sequence ID" value="AAI07753.1"/>
    <property type="molecule type" value="mRNA"/>
</dbReference>
<dbReference type="EMBL" id="BC109241">
    <property type="protein sequence ID" value="AAI09242.1"/>
    <property type="molecule type" value="mRNA"/>
</dbReference>
<dbReference type="EMBL" id="BC109242">
    <property type="protein sequence ID" value="AAI09243.1"/>
    <property type="molecule type" value="mRNA"/>
</dbReference>
<dbReference type="CCDS" id="CCDS41277.1">
    <molecule id="P47756-2"/>
</dbReference>
<dbReference type="CCDS" id="CCDS55579.1">
    <molecule id="P47756-1"/>
</dbReference>
<dbReference type="RefSeq" id="NP_001193469.1">
    <molecule id="P47756-1"/>
    <property type="nucleotide sequence ID" value="NM_001206540.3"/>
</dbReference>
<dbReference type="RefSeq" id="NP_001269091.1">
    <property type="nucleotide sequence ID" value="NM_001282162.1"/>
</dbReference>
<dbReference type="RefSeq" id="NP_004921.1">
    <molecule id="P47756-2"/>
    <property type="nucleotide sequence ID" value="NM_004930.5"/>
</dbReference>
<dbReference type="PDB" id="8F8Q">
    <property type="method" value="EM"/>
    <property type="resolution" value="2.79 A"/>
    <property type="chains" value="H=2-270"/>
</dbReference>
<dbReference type="PDBsum" id="8F8Q"/>
<dbReference type="EMDB" id="EMD-28933"/>
<dbReference type="SMR" id="P47756"/>
<dbReference type="BioGRID" id="107282">
    <property type="interactions" value="1074"/>
</dbReference>
<dbReference type="ComplexPortal" id="CPX-8695">
    <property type="entry name" value="F-actin capping protein complex, CAPZA1 variant"/>
</dbReference>
<dbReference type="ComplexPortal" id="CPX-8696">
    <property type="entry name" value="F-actin capping protein complex, CAPZA2 variant"/>
</dbReference>
<dbReference type="CORUM" id="P47756"/>
<dbReference type="FunCoup" id="P47756">
    <property type="interactions" value="2375"/>
</dbReference>
<dbReference type="IntAct" id="P47756">
    <property type="interactions" value="866"/>
</dbReference>
<dbReference type="MINT" id="P47756"/>
<dbReference type="STRING" id="9606.ENSP00000401010"/>
<dbReference type="ChEMBL" id="CHEMBL4295764"/>
<dbReference type="CarbonylDB" id="P47756"/>
<dbReference type="GlyGen" id="P47756">
    <property type="glycosylation" value="1 site, 1 O-linked glycan (1 site)"/>
</dbReference>
<dbReference type="iPTMnet" id="P47756"/>
<dbReference type="MetOSite" id="P47756"/>
<dbReference type="PhosphoSitePlus" id="P47756"/>
<dbReference type="SwissPalm" id="P47756"/>
<dbReference type="BioMuta" id="CAPZB"/>
<dbReference type="DMDM" id="13124696"/>
<dbReference type="OGP" id="P47756"/>
<dbReference type="REPRODUCTION-2DPAGE" id="IPI00026185"/>
<dbReference type="jPOST" id="P47756"/>
<dbReference type="MassIVE" id="P47756"/>
<dbReference type="PaxDb" id="9606-ENSP00000401010"/>
<dbReference type="PeptideAtlas" id="P47756"/>
<dbReference type="ProteomicsDB" id="55793">
    <molecule id="P47756-1"/>
</dbReference>
<dbReference type="ProteomicsDB" id="55794">
    <molecule id="P47756-2"/>
</dbReference>
<dbReference type="Pumba" id="P47756"/>
<dbReference type="TopDownProteomics" id="P47756-2">
    <molecule id="P47756-2"/>
</dbReference>
<dbReference type="Antibodypedia" id="7956">
    <property type="antibodies" value="291 antibodies from 36 providers"/>
</dbReference>
<dbReference type="DNASU" id="832"/>
<dbReference type="Ensembl" id="ENST00000264202.8">
    <molecule id="P47756-2"/>
    <property type="protein sequence ID" value="ENSP00000264202.7"/>
    <property type="gene ID" value="ENSG00000077549.19"/>
</dbReference>
<dbReference type="Ensembl" id="ENST00000375142.6">
    <molecule id="P47756-1"/>
    <property type="protein sequence ID" value="ENSP00000364284.1"/>
    <property type="gene ID" value="ENSG00000077549.19"/>
</dbReference>
<dbReference type="Ensembl" id="ENST00000674432.1">
    <molecule id="P47756-1"/>
    <property type="protein sequence ID" value="ENSP00000501528.1"/>
    <property type="gene ID" value="ENSG00000077549.19"/>
</dbReference>
<dbReference type="GeneID" id="832"/>
<dbReference type="KEGG" id="hsa:832"/>
<dbReference type="MANE-Select" id="ENST00000264202.8">
    <property type="protein sequence ID" value="ENSP00000264202.7"/>
    <property type="RefSeq nucleotide sequence ID" value="NM_004930.5"/>
    <property type="RefSeq protein sequence ID" value="NP_004921.1"/>
</dbReference>
<dbReference type="UCSC" id="uc001bce.5">
    <molecule id="P47756-2"/>
    <property type="organism name" value="human"/>
</dbReference>
<dbReference type="AGR" id="HGNC:1491"/>
<dbReference type="CTD" id="832"/>
<dbReference type="DisGeNET" id="832"/>
<dbReference type="GeneCards" id="CAPZB"/>
<dbReference type="HGNC" id="HGNC:1491">
    <property type="gene designation" value="CAPZB"/>
</dbReference>
<dbReference type="HPA" id="ENSG00000077549">
    <property type="expression patterns" value="Low tissue specificity"/>
</dbReference>
<dbReference type="MIM" id="601572">
    <property type="type" value="gene"/>
</dbReference>
<dbReference type="neXtProt" id="NX_P47756"/>
<dbReference type="OpenTargets" id="ENSG00000077549"/>
<dbReference type="PharmGKB" id="PA26072"/>
<dbReference type="VEuPathDB" id="HostDB:ENSG00000077549"/>
<dbReference type="eggNOG" id="KOG3174">
    <property type="taxonomic scope" value="Eukaryota"/>
</dbReference>
<dbReference type="GeneTree" id="ENSGT00390000017957"/>
<dbReference type="HOGENOM" id="CLU_045864_2_0_1"/>
<dbReference type="InParanoid" id="P47756"/>
<dbReference type="OMA" id="WSNKYYP"/>
<dbReference type="OrthoDB" id="9979678at2759"/>
<dbReference type="PAN-GO" id="P47756">
    <property type="GO annotations" value="6 GO annotations based on evolutionary models"/>
</dbReference>
<dbReference type="PhylomeDB" id="P47756"/>
<dbReference type="TreeFam" id="TF105732"/>
<dbReference type="PathwayCommons" id="P47756"/>
<dbReference type="Reactome" id="R-HSA-2132295">
    <property type="pathway name" value="MHC class II antigen presentation"/>
</dbReference>
<dbReference type="Reactome" id="R-HSA-3371497">
    <property type="pathway name" value="HSP90 chaperone cycle for steroid hormone receptors (SHR) in the presence of ligand"/>
</dbReference>
<dbReference type="Reactome" id="R-HSA-6807878">
    <property type="pathway name" value="COPI-mediated anterograde transport"/>
</dbReference>
<dbReference type="Reactome" id="R-HSA-6811436">
    <property type="pathway name" value="COPI-independent Golgi-to-ER retrograde traffic"/>
</dbReference>
<dbReference type="Reactome" id="R-HSA-9013405">
    <property type="pathway name" value="RHOD GTPase cycle"/>
</dbReference>
<dbReference type="Reactome" id="R-HSA-9035034">
    <property type="pathway name" value="RHOF GTPase cycle"/>
</dbReference>
<dbReference type="Reactome" id="R-HSA-9662360">
    <property type="pathway name" value="Sensory processing of sound by inner hair cells of the cochlea"/>
</dbReference>
<dbReference type="Reactome" id="R-HSA-983231">
    <property type="pathway name" value="Factors involved in megakaryocyte development and platelet production"/>
</dbReference>
<dbReference type="SignaLink" id="P47756"/>
<dbReference type="BioGRID-ORCS" id="832">
    <property type="hits" value="767 hits in 1185 CRISPR screens"/>
</dbReference>
<dbReference type="ChiTaRS" id="CAPZB">
    <property type="organism name" value="human"/>
</dbReference>
<dbReference type="GeneWiki" id="CAPZB"/>
<dbReference type="GenomeRNAi" id="832"/>
<dbReference type="Pharos" id="P47756">
    <property type="development level" value="Tbio"/>
</dbReference>
<dbReference type="PRO" id="PR:P47756"/>
<dbReference type="Proteomes" id="UP000005640">
    <property type="component" value="Chromosome 1"/>
</dbReference>
<dbReference type="RNAct" id="P47756">
    <property type="molecule type" value="protein"/>
</dbReference>
<dbReference type="Bgee" id="ENSG00000077549">
    <property type="expression patterns" value="Expressed in muscle layer of sigmoid colon and 211 other cell types or tissues"/>
</dbReference>
<dbReference type="ExpressionAtlas" id="P47756">
    <property type="expression patterns" value="baseline and differential"/>
</dbReference>
<dbReference type="GO" id="GO:0015629">
    <property type="term" value="C:actin cytoskeleton"/>
    <property type="evidence" value="ECO:0000304"/>
    <property type="project" value="ProtInc"/>
</dbReference>
<dbReference type="GO" id="GO:0005903">
    <property type="term" value="C:brush border"/>
    <property type="evidence" value="ECO:0007669"/>
    <property type="project" value="Ensembl"/>
</dbReference>
<dbReference type="GO" id="GO:0030863">
    <property type="term" value="C:cortical cytoskeleton"/>
    <property type="evidence" value="ECO:0007669"/>
    <property type="project" value="Ensembl"/>
</dbReference>
<dbReference type="GO" id="GO:0005856">
    <property type="term" value="C:cytoskeleton"/>
    <property type="evidence" value="ECO:0000304"/>
    <property type="project" value="UniProtKB"/>
</dbReference>
<dbReference type="GO" id="GO:0005829">
    <property type="term" value="C:cytosol"/>
    <property type="evidence" value="ECO:0000304"/>
    <property type="project" value="Reactome"/>
</dbReference>
<dbReference type="GO" id="GO:0070062">
    <property type="term" value="C:extracellular exosome"/>
    <property type="evidence" value="ECO:0007005"/>
    <property type="project" value="UniProtKB"/>
</dbReference>
<dbReference type="GO" id="GO:0008290">
    <property type="term" value="C:F-actin capping protein complex"/>
    <property type="evidence" value="ECO:0000304"/>
    <property type="project" value="ProtInc"/>
</dbReference>
<dbReference type="GO" id="GO:0098686">
    <property type="term" value="C:hippocampal mossy fiber to CA3 synapse"/>
    <property type="evidence" value="ECO:0007669"/>
    <property type="project" value="Ensembl"/>
</dbReference>
<dbReference type="GO" id="GO:0030027">
    <property type="term" value="C:lamellipodium"/>
    <property type="evidence" value="ECO:0007669"/>
    <property type="project" value="Ensembl"/>
</dbReference>
<dbReference type="GO" id="GO:0016020">
    <property type="term" value="C:membrane"/>
    <property type="evidence" value="ECO:0007669"/>
    <property type="project" value="Ensembl"/>
</dbReference>
<dbReference type="GO" id="GO:0014069">
    <property type="term" value="C:postsynaptic density"/>
    <property type="evidence" value="ECO:0007669"/>
    <property type="project" value="Ensembl"/>
</dbReference>
<dbReference type="GO" id="GO:0030017">
    <property type="term" value="C:sarcomere"/>
    <property type="evidence" value="ECO:0007669"/>
    <property type="project" value="UniProtKB-SubCell"/>
</dbReference>
<dbReference type="GO" id="GO:0098685">
    <property type="term" value="C:Schaffer collateral - CA1 synapse"/>
    <property type="evidence" value="ECO:0007669"/>
    <property type="project" value="Ensembl"/>
</dbReference>
<dbReference type="GO" id="GO:0120212">
    <property type="term" value="C:sperm head-tail coupling apparatus"/>
    <property type="evidence" value="ECO:0007669"/>
    <property type="project" value="Ensembl"/>
</dbReference>
<dbReference type="GO" id="GO:0071203">
    <property type="term" value="C:WASH complex"/>
    <property type="evidence" value="ECO:0000314"/>
    <property type="project" value="UniProtKB"/>
</dbReference>
<dbReference type="GO" id="GO:0003779">
    <property type="term" value="F:actin binding"/>
    <property type="evidence" value="ECO:0000314"/>
    <property type="project" value="UniProtKB"/>
</dbReference>
<dbReference type="GO" id="GO:0045296">
    <property type="term" value="F:cadherin binding"/>
    <property type="evidence" value="ECO:0007005"/>
    <property type="project" value="BHF-UCL"/>
</dbReference>
<dbReference type="GO" id="GO:0008154">
    <property type="term" value="P:actin polymerization or depolymerization"/>
    <property type="evidence" value="ECO:0007669"/>
    <property type="project" value="Ensembl"/>
</dbReference>
<dbReference type="GO" id="GO:0051016">
    <property type="term" value="P:barbed-end actin filament capping"/>
    <property type="evidence" value="ECO:0007669"/>
    <property type="project" value="InterPro"/>
</dbReference>
<dbReference type="GO" id="GO:0007010">
    <property type="term" value="P:cytoskeleton organization"/>
    <property type="evidence" value="ECO:0000315"/>
    <property type="project" value="UniProtKB"/>
</dbReference>
<dbReference type="GO" id="GO:0030032">
    <property type="term" value="P:lamellipodium assembly"/>
    <property type="evidence" value="ECO:0007669"/>
    <property type="project" value="Ensembl"/>
</dbReference>
<dbReference type="GO" id="GO:0022604">
    <property type="term" value="P:regulation of cell morphogenesis"/>
    <property type="evidence" value="ECO:0000315"/>
    <property type="project" value="UniProtKB"/>
</dbReference>
<dbReference type="FunFam" id="1.20.58.570:FF:000001">
    <property type="entry name" value="F-actin-capping protein subunit beta"/>
    <property type="match status" value="1"/>
</dbReference>
<dbReference type="FunFam" id="3.90.1150.210:FF:000001">
    <property type="entry name" value="F-actin-capping protein subunit beta"/>
    <property type="match status" value="1"/>
</dbReference>
<dbReference type="Gene3D" id="1.20.58.570">
    <property type="match status" value="1"/>
</dbReference>
<dbReference type="Gene3D" id="3.90.1150.210">
    <property type="entry name" value="F-actin capping protein, beta subunit"/>
    <property type="match status" value="1"/>
</dbReference>
<dbReference type="InterPro" id="IPR037282">
    <property type="entry name" value="CapZ_alpha/beta"/>
</dbReference>
<dbReference type="InterPro" id="IPR042276">
    <property type="entry name" value="CapZ_alpha/beta_2"/>
</dbReference>
<dbReference type="InterPro" id="IPR001698">
    <property type="entry name" value="CAPZB"/>
</dbReference>
<dbReference type="InterPro" id="IPR043175">
    <property type="entry name" value="CAPZB_N"/>
</dbReference>
<dbReference type="InterPro" id="IPR019771">
    <property type="entry name" value="F-actin_capping_bsu_CS"/>
</dbReference>
<dbReference type="PANTHER" id="PTHR10619">
    <property type="entry name" value="F-ACTIN-CAPPING PROTEIN SUBUNIT BETA"/>
    <property type="match status" value="1"/>
</dbReference>
<dbReference type="PANTHER" id="PTHR10619:SF1">
    <property type="entry name" value="F-ACTIN-CAPPING PROTEIN SUBUNIT BETA"/>
    <property type="match status" value="1"/>
</dbReference>
<dbReference type="Pfam" id="PF01115">
    <property type="entry name" value="F_actin_cap_B"/>
    <property type="match status" value="1"/>
</dbReference>
<dbReference type="PRINTS" id="PR00192">
    <property type="entry name" value="FACTINCAPB"/>
</dbReference>
<dbReference type="SUPFAM" id="SSF90096">
    <property type="entry name" value="Subunits of heterodimeric actin filament capping protein Capz"/>
    <property type="match status" value="1"/>
</dbReference>
<dbReference type="PROSITE" id="PS00231">
    <property type="entry name" value="F_ACTIN_CAPPING_BETA"/>
    <property type="match status" value="1"/>
</dbReference>
<accession>P47756</accession>
<accession>Q32Q68</accession>
<accession>Q5U0L4</accession>
<accession>Q8TB49</accession>
<accession>Q9NUC4</accession>
<name>CAPZB_HUMAN</name>
<gene>
    <name evidence="10" type="primary">CAPZB</name>
</gene>
<keyword id="KW-0002">3D-structure</keyword>
<keyword id="KW-0007">Acetylation</keyword>
<keyword id="KW-0117">Actin capping</keyword>
<keyword id="KW-0009">Actin-binding</keyword>
<keyword id="KW-0025">Alternative splicing</keyword>
<keyword id="KW-0963">Cytoplasm</keyword>
<keyword id="KW-0206">Cytoskeleton</keyword>
<keyword id="KW-0903">Direct protein sequencing</keyword>
<keyword id="KW-0597">Phosphoprotein</keyword>
<keyword id="KW-1267">Proteomics identification</keyword>
<keyword id="KW-1185">Reference proteome</keyword>